<dbReference type="EMBL" id="CP000075">
    <property type="protein sequence ID" value="AAY36460.1"/>
    <property type="molecule type" value="Genomic_DNA"/>
</dbReference>
<dbReference type="RefSeq" id="WP_004406125.1">
    <property type="nucleotide sequence ID" value="NC_007005.1"/>
</dbReference>
<dbReference type="RefSeq" id="YP_234498.1">
    <property type="nucleotide sequence ID" value="NC_007005.1"/>
</dbReference>
<dbReference type="SMR" id="Q4ZWL2"/>
<dbReference type="STRING" id="205918.Psyr_1409"/>
<dbReference type="KEGG" id="psb:Psyr_1409"/>
<dbReference type="PATRIC" id="fig|205918.7.peg.1445"/>
<dbReference type="eggNOG" id="COG0632">
    <property type="taxonomic scope" value="Bacteria"/>
</dbReference>
<dbReference type="HOGENOM" id="CLU_087936_0_0_6"/>
<dbReference type="OrthoDB" id="5293449at2"/>
<dbReference type="Proteomes" id="UP000000426">
    <property type="component" value="Chromosome"/>
</dbReference>
<dbReference type="GO" id="GO:0005737">
    <property type="term" value="C:cytoplasm"/>
    <property type="evidence" value="ECO:0007669"/>
    <property type="project" value="UniProtKB-SubCell"/>
</dbReference>
<dbReference type="GO" id="GO:0009379">
    <property type="term" value="C:Holliday junction helicase complex"/>
    <property type="evidence" value="ECO:0007669"/>
    <property type="project" value="InterPro"/>
</dbReference>
<dbReference type="GO" id="GO:0048476">
    <property type="term" value="C:Holliday junction resolvase complex"/>
    <property type="evidence" value="ECO:0007669"/>
    <property type="project" value="UniProtKB-UniRule"/>
</dbReference>
<dbReference type="GO" id="GO:0005524">
    <property type="term" value="F:ATP binding"/>
    <property type="evidence" value="ECO:0007669"/>
    <property type="project" value="InterPro"/>
</dbReference>
<dbReference type="GO" id="GO:0000400">
    <property type="term" value="F:four-way junction DNA binding"/>
    <property type="evidence" value="ECO:0007669"/>
    <property type="project" value="UniProtKB-UniRule"/>
</dbReference>
<dbReference type="GO" id="GO:0009378">
    <property type="term" value="F:four-way junction helicase activity"/>
    <property type="evidence" value="ECO:0007669"/>
    <property type="project" value="InterPro"/>
</dbReference>
<dbReference type="GO" id="GO:0006310">
    <property type="term" value="P:DNA recombination"/>
    <property type="evidence" value="ECO:0007669"/>
    <property type="project" value="UniProtKB-UniRule"/>
</dbReference>
<dbReference type="GO" id="GO:0006281">
    <property type="term" value="P:DNA repair"/>
    <property type="evidence" value="ECO:0007669"/>
    <property type="project" value="UniProtKB-UniRule"/>
</dbReference>
<dbReference type="CDD" id="cd14332">
    <property type="entry name" value="UBA_RuvA_C"/>
    <property type="match status" value="1"/>
</dbReference>
<dbReference type="Gene3D" id="1.10.150.20">
    <property type="entry name" value="5' to 3' exonuclease, C-terminal subdomain"/>
    <property type="match status" value="1"/>
</dbReference>
<dbReference type="Gene3D" id="1.10.8.10">
    <property type="entry name" value="DNA helicase RuvA subunit, C-terminal domain"/>
    <property type="match status" value="1"/>
</dbReference>
<dbReference type="Gene3D" id="2.40.50.140">
    <property type="entry name" value="Nucleic acid-binding proteins"/>
    <property type="match status" value="1"/>
</dbReference>
<dbReference type="HAMAP" id="MF_00031">
    <property type="entry name" value="DNA_HJ_migration_RuvA"/>
    <property type="match status" value="1"/>
</dbReference>
<dbReference type="InterPro" id="IPR013849">
    <property type="entry name" value="DNA_helicase_Holl-junc_RuvA_I"/>
</dbReference>
<dbReference type="InterPro" id="IPR003583">
    <property type="entry name" value="Hlx-hairpin-Hlx_DNA-bd_motif"/>
</dbReference>
<dbReference type="InterPro" id="IPR012340">
    <property type="entry name" value="NA-bd_OB-fold"/>
</dbReference>
<dbReference type="InterPro" id="IPR000085">
    <property type="entry name" value="RuvA"/>
</dbReference>
<dbReference type="InterPro" id="IPR010994">
    <property type="entry name" value="RuvA_2-like"/>
</dbReference>
<dbReference type="InterPro" id="IPR011114">
    <property type="entry name" value="RuvA_C"/>
</dbReference>
<dbReference type="InterPro" id="IPR036267">
    <property type="entry name" value="RuvA_C_sf"/>
</dbReference>
<dbReference type="NCBIfam" id="TIGR00084">
    <property type="entry name" value="ruvA"/>
    <property type="match status" value="1"/>
</dbReference>
<dbReference type="Pfam" id="PF14520">
    <property type="entry name" value="HHH_5"/>
    <property type="match status" value="1"/>
</dbReference>
<dbReference type="Pfam" id="PF07499">
    <property type="entry name" value="RuvA_C"/>
    <property type="match status" value="1"/>
</dbReference>
<dbReference type="Pfam" id="PF01330">
    <property type="entry name" value="RuvA_N"/>
    <property type="match status" value="1"/>
</dbReference>
<dbReference type="SMART" id="SM00278">
    <property type="entry name" value="HhH1"/>
    <property type="match status" value="2"/>
</dbReference>
<dbReference type="SUPFAM" id="SSF46929">
    <property type="entry name" value="DNA helicase RuvA subunit, C-terminal domain"/>
    <property type="match status" value="1"/>
</dbReference>
<dbReference type="SUPFAM" id="SSF50249">
    <property type="entry name" value="Nucleic acid-binding proteins"/>
    <property type="match status" value="1"/>
</dbReference>
<dbReference type="SUPFAM" id="SSF47781">
    <property type="entry name" value="RuvA domain 2-like"/>
    <property type="match status" value="1"/>
</dbReference>
<proteinExistence type="inferred from homology"/>
<reference key="1">
    <citation type="journal article" date="2005" name="Proc. Natl. Acad. Sci. U.S.A.">
        <title>Comparison of the complete genome sequences of Pseudomonas syringae pv. syringae B728a and pv. tomato DC3000.</title>
        <authorList>
            <person name="Feil H."/>
            <person name="Feil W.S."/>
            <person name="Chain P."/>
            <person name="Larimer F."/>
            <person name="Dibartolo G."/>
            <person name="Copeland A."/>
            <person name="Lykidis A."/>
            <person name="Trong S."/>
            <person name="Nolan M."/>
            <person name="Goltsman E."/>
            <person name="Thiel J."/>
            <person name="Malfatti S."/>
            <person name="Loper J.E."/>
            <person name="Lapidus A."/>
            <person name="Detter J.C."/>
            <person name="Land M."/>
            <person name="Richardson P.M."/>
            <person name="Kyrpides N.C."/>
            <person name="Ivanova N."/>
            <person name="Lindow S.E."/>
        </authorList>
    </citation>
    <scope>NUCLEOTIDE SEQUENCE [LARGE SCALE GENOMIC DNA]</scope>
    <source>
        <strain>B728a</strain>
    </source>
</reference>
<keyword id="KW-0963">Cytoplasm</keyword>
<keyword id="KW-0227">DNA damage</keyword>
<keyword id="KW-0233">DNA recombination</keyword>
<keyword id="KW-0234">DNA repair</keyword>
<keyword id="KW-0238">DNA-binding</keyword>
<feature type="chain" id="PRO_0000224897" description="Holliday junction branch migration complex subunit RuvA">
    <location>
        <begin position="1"/>
        <end position="202"/>
    </location>
</feature>
<feature type="region of interest" description="Domain I" evidence="1">
    <location>
        <begin position="1"/>
        <end position="64"/>
    </location>
</feature>
<feature type="region of interest" description="Domain II" evidence="1">
    <location>
        <begin position="65"/>
        <end position="143"/>
    </location>
</feature>
<feature type="region of interest" description="Flexible linker" evidence="1">
    <location>
        <begin position="144"/>
        <end position="153"/>
    </location>
</feature>
<feature type="region of interest" description="Domain III" evidence="1">
    <location>
        <begin position="154"/>
        <end position="202"/>
    </location>
</feature>
<gene>
    <name evidence="1" type="primary">ruvA</name>
    <name type="ordered locus">Psyr_1409</name>
</gene>
<sequence>MIGRLRGSLAEKQPPHLVLDVNGVGYEVEVPMTTLYRLPHVGETVTLHTHLVVREDAHLLYGFYEKRERELFRELIRLNGVGPKLALALMSGLEVDELVRCVQAQDTSALTRIPGVGKKTAERLLVELKDRFKAWEALPGTFTLVSNGPNQAEPVASAESDAVSALISLGYKPQEASKAVSAIKEKDLSSADLIRRALKGMG</sequence>
<evidence type="ECO:0000255" key="1">
    <source>
        <dbReference type="HAMAP-Rule" id="MF_00031"/>
    </source>
</evidence>
<protein>
    <recommendedName>
        <fullName evidence="1">Holliday junction branch migration complex subunit RuvA</fullName>
    </recommendedName>
</protein>
<name>RUVA_PSEU2</name>
<comment type="function">
    <text evidence="1">The RuvA-RuvB-RuvC complex processes Holliday junction (HJ) DNA during genetic recombination and DNA repair, while the RuvA-RuvB complex plays an important role in the rescue of blocked DNA replication forks via replication fork reversal (RFR). RuvA specifically binds to HJ cruciform DNA, conferring on it an open structure. The RuvB hexamer acts as an ATP-dependent pump, pulling dsDNA into and through the RuvAB complex. HJ branch migration allows RuvC to scan DNA until it finds its consensus sequence, where it cleaves and resolves the cruciform DNA.</text>
</comment>
<comment type="subunit">
    <text evidence="1">Homotetramer. Forms an RuvA(8)-RuvB(12)-Holliday junction (HJ) complex. HJ DNA is sandwiched between 2 RuvA tetramers; dsDNA enters through RuvA and exits via RuvB. An RuvB hexamer assembles on each DNA strand where it exits the tetramer. Each RuvB hexamer is contacted by two RuvA subunits (via domain III) on 2 adjacent RuvB subunits; this complex drives branch migration. In the full resolvosome a probable DNA-RuvA(4)-RuvB(12)-RuvC(2) complex forms which resolves the HJ.</text>
</comment>
<comment type="subcellular location">
    <subcellularLocation>
        <location evidence="1">Cytoplasm</location>
    </subcellularLocation>
</comment>
<comment type="domain">
    <text evidence="1">Has three domains with a flexible linker between the domains II and III and assumes an 'L' shape. Domain III is highly mobile and contacts RuvB.</text>
</comment>
<comment type="similarity">
    <text evidence="1">Belongs to the RuvA family.</text>
</comment>
<accession>Q4ZWL2</accession>
<organism>
    <name type="scientific">Pseudomonas syringae pv. syringae (strain B728a)</name>
    <dbReference type="NCBI Taxonomy" id="205918"/>
    <lineage>
        <taxon>Bacteria</taxon>
        <taxon>Pseudomonadati</taxon>
        <taxon>Pseudomonadota</taxon>
        <taxon>Gammaproteobacteria</taxon>
        <taxon>Pseudomonadales</taxon>
        <taxon>Pseudomonadaceae</taxon>
        <taxon>Pseudomonas</taxon>
        <taxon>Pseudomonas syringae</taxon>
    </lineage>
</organism>